<protein>
    <recommendedName>
        <fullName evidence="1">Energy-coupling factor transporter ATP-binding protein EcfA1</fullName>
        <shortName evidence="1">ECF transporter A component EcfA1</shortName>
        <ecNumber evidence="1">7.-.-.-</ecNumber>
    </recommendedName>
</protein>
<sequence>MKSIIDVKNLSFRYKENQNYYDVKDITFHVKRGEWLSIVGHNGSGKSTTVRLIDGLLEAESGEIVIDGQRLTEENVWNIRRQIGMVFQNPDNQFVGATVEDDVAFGLENQGLSRQEMKKRVEEALALVGMLDFKKREPARLSGGQKQRVAIAGVVALRPAILILDEATSMLDPEGRRELIGTVKGIRKDYDMTVISITHDLEEVAMSDRVLVMKKGEIESTSSPRELFSRNDLDQIGLDDPFANQLKKSLSQNGYDLPENYLTESELEDKLWELL</sequence>
<name>ECFA1_STRR6</name>
<keyword id="KW-0067">ATP-binding</keyword>
<keyword id="KW-1003">Cell membrane</keyword>
<keyword id="KW-0472">Membrane</keyword>
<keyword id="KW-0547">Nucleotide-binding</keyword>
<keyword id="KW-1185">Reference proteome</keyword>
<keyword id="KW-1278">Translocase</keyword>
<keyword id="KW-0813">Transport</keyword>
<feature type="chain" id="PRO_0000092102" description="Energy-coupling factor transporter ATP-binding protein EcfA1">
    <location>
        <begin position="1"/>
        <end position="275"/>
    </location>
</feature>
<feature type="domain" description="ABC transporter" evidence="1">
    <location>
        <begin position="5"/>
        <end position="240"/>
    </location>
</feature>
<feature type="binding site" evidence="1">
    <location>
        <begin position="40"/>
        <end position="47"/>
    </location>
    <ligand>
        <name>ATP</name>
        <dbReference type="ChEBI" id="CHEBI:30616"/>
    </ligand>
</feature>
<gene>
    <name evidence="1" type="primary">ecfA1</name>
    <name type="synonym">cbiO1</name>
    <name type="synonym">stpA</name>
    <name type="ordered locus">spr2026</name>
</gene>
<evidence type="ECO:0000255" key="1">
    <source>
        <dbReference type="HAMAP-Rule" id="MF_01710"/>
    </source>
</evidence>
<comment type="function">
    <text evidence="1">ATP-binding (A) component of a common energy-coupling factor (ECF) ABC-transporter complex. Unlike classic ABC transporters this ECF transporter provides the energy necessary to transport a number of different substrates.</text>
</comment>
<comment type="subunit">
    <text evidence="1">Forms a stable energy-coupling factor (ECF) transporter complex composed of 2 membrane-embedded substrate-binding proteins (S component), 2 ATP-binding proteins (A component) and 2 transmembrane proteins (T component).</text>
</comment>
<comment type="subcellular location">
    <subcellularLocation>
        <location evidence="1">Cell membrane</location>
        <topology evidence="1">Peripheral membrane protein</topology>
    </subcellularLocation>
</comment>
<comment type="similarity">
    <text evidence="1">Belongs to the ABC transporter superfamily. Energy-coupling factor EcfA family.</text>
</comment>
<dbReference type="EC" id="7.-.-.-" evidence="1"/>
<dbReference type="EMBL" id="AE007317">
    <property type="protein sequence ID" value="AAL00828.1"/>
    <property type="molecule type" value="Genomic_DNA"/>
</dbReference>
<dbReference type="PIR" id="G98124">
    <property type="entry name" value="G98124"/>
</dbReference>
<dbReference type="RefSeq" id="NP_359617.1">
    <property type="nucleotide sequence ID" value="NC_003098.1"/>
</dbReference>
<dbReference type="RefSeq" id="WP_000835715.1">
    <property type="nucleotide sequence ID" value="NC_003098.1"/>
</dbReference>
<dbReference type="SMR" id="Q8DMX9"/>
<dbReference type="STRING" id="171101.spr2026"/>
<dbReference type="KEGG" id="spr:spr2026"/>
<dbReference type="PATRIC" id="fig|171101.6.peg.2192"/>
<dbReference type="eggNOG" id="COG1122">
    <property type="taxonomic scope" value="Bacteria"/>
</dbReference>
<dbReference type="HOGENOM" id="CLU_000604_1_22_9"/>
<dbReference type="Proteomes" id="UP000000586">
    <property type="component" value="Chromosome"/>
</dbReference>
<dbReference type="GO" id="GO:0043190">
    <property type="term" value="C:ATP-binding cassette (ABC) transporter complex"/>
    <property type="evidence" value="ECO:0000318"/>
    <property type="project" value="GO_Central"/>
</dbReference>
<dbReference type="GO" id="GO:0005524">
    <property type="term" value="F:ATP binding"/>
    <property type="evidence" value="ECO:0000318"/>
    <property type="project" value="GO_Central"/>
</dbReference>
<dbReference type="GO" id="GO:0016887">
    <property type="term" value="F:ATP hydrolysis activity"/>
    <property type="evidence" value="ECO:0007669"/>
    <property type="project" value="InterPro"/>
</dbReference>
<dbReference type="GO" id="GO:0042626">
    <property type="term" value="F:ATPase-coupled transmembrane transporter activity"/>
    <property type="evidence" value="ECO:0000318"/>
    <property type="project" value="GO_Central"/>
</dbReference>
<dbReference type="CDD" id="cd03225">
    <property type="entry name" value="ABC_cobalt_CbiO_domain1"/>
    <property type="match status" value="1"/>
</dbReference>
<dbReference type="FunFam" id="3.40.50.300:FF:000224">
    <property type="entry name" value="Energy-coupling factor transporter ATP-binding protein EcfA"/>
    <property type="match status" value="1"/>
</dbReference>
<dbReference type="Gene3D" id="3.40.50.300">
    <property type="entry name" value="P-loop containing nucleotide triphosphate hydrolases"/>
    <property type="match status" value="1"/>
</dbReference>
<dbReference type="InterPro" id="IPR003593">
    <property type="entry name" value="AAA+_ATPase"/>
</dbReference>
<dbReference type="InterPro" id="IPR003439">
    <property type="entry name" value="ABC_transporter-like_ATP-bd"/>
</dbReference>
<dbReference type="InterPro" id="IPR017871">
    <property type="entry name" value="ABC_transporter-like_CS"/>
</dbReference>
<dbReference type="InterPro" id="IPR015856">
    <property type="entry name" value="ABC_transpr_CbiO/EcfA_su"/>
</dbReference>
<dbReference type="InterPro" id="IPR050095">
    <property type="entry name" value="ECF_ABC_transporter_ATP-bd"/>
</dbReference>
<dbReference type="InterPro" id="IPR030947">
    <property type="entry name" value="EcfA_1"/>
</dbReference>
<dbReference type="InterPro" id="IPR027417">
    <property type="entry name" value="P-loop_NTPase"/>
</dbReference>
<dbReference type="NCBIfam" id="TIGR04520">
    <property type="entry name" value="ECF_ATPase_1"/>
    <property type="match status" value="1"/>
</dbReference>
<dbReference type="NCBIfam" id="NF010156">
    <property type="entry name" value="PRK13635.1"/>
    <property type="match status" value="1"/>
</dbReference>
<dbReference type="NCBIfam" id="NF010167">
    <property type="entry name" value="PRK13648.1"/>
    <property type="match status" value="1"/>
</dbReference>
<dbReference type="PANTHER" id="PTHR43553:SF24">
    <property type="entry name" value="ENERGY-COUPLING FACTOR TRANSPORTER ATP-BINDING PROTEIN ECFA1"/>
    <property type="match status" value="1"/>
</dbReference>
<dbReference type="PANTHER" id="PTHR43553">
    <property type="entry name" value="HEAVY METAL TRANSPORTER"/>
    <property type="match status" value="1"/>
</dbReference>
<dbReference type="Pfam" id="PF00005">
    <property type="entry name" value="ABC_tran"/>
    <property type="match status" value="1"/>
</dbReference>
<dbReference type="SMART" id="SM00382">
    <property type="entry name" value="AAA"/>
    <property type="match status" value="1"/>
</dbReference>
<dbReference type="SUPFAM" id="SSF52540">
    <property type="entry name" value="P-loop containing nucleoside triphosphate hydrolases"/>
    <property type="match status" value="1"/>
</dbReference>
<dbReference type="PROSITE" id="PS00211">
    <property type="entry name" value="ABC_TRANSPORTER_1"/>
    <property type="match status" value="1"/>
</dbReference>
<dbReference type="PROSITE" id="PS50893">
    <property type="entry name" value="ABC_TRANSPORTER_2"/>
    <property type="match status" value="1"/>
</dbReference>
<dbReference type="PROSITE" id="PS51246">
    <property type="entry name" value="CBIO"/>
    <property type="match status" value="1"/>
</dbReference>
<accession>Q8DMX9</accession>
<reference key="1">
    <citation type="journal article" date="2001" name="J. Bacteriol.">
        <title>Genome of the bacterium Streptococcus pneumoniae strain R6.</title>
        <authorList>
            <person name="Hoskins J."/>
            <person name="Alborn W.E. Jr."/>
            <person name="Arnold J."/>
            <person name="Blaszczak L.C."/>
            <person name="Burgett S."/>
            <person name="DeHoff B.S."/>
            <person name="Estrem S.T."/>
            <person name="Fritz L."/>
            <person name="Fu D.-J."/>
            <person name="Fuller W."/>
            <person name="Geringer C."/>
            <person name="Gilmour R."/>
            <person name="Glass J.S."/>
            <person name="Khoja H."/>
            <person name="Kraft A.R."/>
            <person name="Lagace R.E."/>
            <person name="LeBlanc D.J."/>
            <person name="Lee L.N."/>
            <person name="Lefkowitz E.J."/>
            <person name="Lu J."/>
            <person name="Matsushima P."/>
            <person name="McAhren S.M."/>
            <person name="McHenney M."/>
            <person name="McLeaster K."/>
            <person name="Mundy C.W."/>
            <person name="Nicas T.I."/>
            <person name="Norris F.H."/>
            <person name="O'Gara M."/>
            <person name="Peery R.B."/>
            <person name="Robertson G.T."/>
            <person name="Rockey P."/>
            <person name="Sun P.-M."/>
            <person name="Winkler M.E."/>
            <person name="Yang Y."/>
            <person name="Young-Bellido M."/>
            <person name="Zhao G."/>
            <person name="Zook C.A."/>
            <person name="Baltz R.H."/>
            <person name="Jaskunas S.R."/>
            <person name="Rosteck P.R. Jr."/>
            <person name="Skatrud P.L."/>
            <person name="Glass J.I."/>
        </authorList>
    </citation>
    <scope>NUCLEOTIDE SEQUENCE [LARGE SCALE GENOMIC DNA]</scope>
    <source>
        <strain>ATCC BAA-255 / R6</strain>
    </source>
</reference>
<proteinExistence type="inferred from homology"/>
<organism>
    <name type="scientific">Streptococcus pneumoniae (strain ATCC BAA-255 / R6)</name>
    <dbReference type="NCBI Taxonomy" id="171101"/>
    <lineage>
        <taxon>Bacteria</taxon>
        <taxon>Bacillati</taxon>
        <taxon>Bacillota</taxon>
        <taxon>Bacilli</taxon>
        <taxon>Lactobacillales</taxon>
        <taxon>Streptococcaceae</taxon>
        <taxon>Streptococcus</taxon>
    </lineage>
</organism>